<proteinExistence type="evidence at protein level"/>
<dbReference type="EMBL" id="DS028122">
    <property type="protein sequence ID" value="EEY67152.1"/>
    <property type="molecule type" value="Genomic_DNA"/>
</dbReference>
<dbReference type="RefSeq" id="XP_002905800.1">
    <property type="nucleotide sequence ID" value="XM_002905754.1"/>
</dbReference>
<dbReference type="STRING" id="403677.D0N0I9"/>
<dbReference type="EnsemblProtists" id="PITG_04089T0">
    <property type="protein sequence ID" value="PITG_04089T0"/>
    <property type="gene ID" value="PITG_04089"/>
</dbReference>
<dbReference type="GeneID" id="9479506"/>
<dbReference type="KEGG" id="pif:PITG_04089"/>
<dbReference type="VEuPathDB" id="FungiDB:PITG_04089"/>
<dbReference type="HOGENOM" id="CLU_158959_0_0_1"/>
<dbReference type="InParanoid" id="D0N0I9"/>
<dbReference type="Proteomes" id="UP000006643">
    <property type="component" value="Partially assembled WGS sequence"/>
</dbReference>
<dbReference type="GO" id="GO:0005576">
    <property type="term" value="C:extracellular region"/>
    <property type="evidence" value="ECO:0007669"/>
    <property type="project" value="UniProtKB-SubCell"/>
</dbReference>
<dbReference type="GO" id="GO:0030430">
    <property type="term" value="C:host cell cytoplasm"/>
    <property type="evidence" value="ECO:0007669"/>
    <property type="project" value="UniProtKB-SubCell"/>
</dbReference>
<dbReference type="GO" id="GO:0044196">
    <property type="term" value="C:host cell nucleolus"/>
    <property type="evidence" value="ECO:0007669"/>
    <property type="project" value="UniProtKB-SubCell"/>
</dbReference>
<accession>D0N0I9</accession>
<name>RD41_PHYIT</name>
<protein>
    <recommendedName>
        <fullName evidence="8">RxLR effector protein PexRD41</fullName>
    </recommendedName>
</protein>
<keyword id="KW-1035">Host cytoplasm</keyword>
<keyword id="KW-1048">Host nucleus</keyword>
<keyword id="KW-1185">Reference proteome</keyword>
<keyword id="KW-0964">Secreted</keyword>
<keyword id="KW-0732">Signal</keyword>
<keyword id="KW-0843">Virulence</keyword>
<gene>
    <name evidence="8" type="primary">PexRD41</name>
    <name type="ORF">PITG_04089</name>
</gene>
<feature type="signal peptide" evidence="1">
    <location>
        <begin position="1"/>
        <end position="21"/>
    </location>
</feature>
<feature type="chain" id="PRO_5003012171" description="RxLR effector protein PexRD41">
    <location>
        <begin position="22"/>
        <end position="102"/>
    </location>
</feature>
<feature type="short sequence motif" description="RxLR-dEER" evidence="10">
    <location>
        <begin position="39"/>
        <end position="53"/>
    </location>
</feature>
<sequence length="102" mass="11199">MRSIFYFALAFAALTCSNASAALPNPDETRLLSDTFTKRSLRVAGQEAARGEEIVRVTAQSTNKIFKRPAEKDMSKLIAAAKKALLEKKMAKLSKVIKKPAK</sequence>
<evidence type="ECO:0000255" key="1"/>
<evidence type="ECO:0000269" key="2">
    <source>
    </source>
</evidence>
<evidence type="ECO:0000269" key="3">
    <source>
    </source>
</evidence>
<evidence type="ECO:0000269" key="4">
    <source>
    </source>
</evidence>
<evidence type="ECO:0000269" key="5">
    <source>
    </source>
</evidence>
<evidence type="ECO:0000269" key="6">
    <source>
    </source>
</evidence>
<evidence type="ECO:0000269" key="7">
    <source>
    </source>
</evidence>
<evidence type="ECO:0000303" key="8">
    <source>
    </source>
</evidence>
<evidence type="ECO:0000305" key="9"/>
<evidence type="ECO:0000305" key="10">
    <source>
    </source>
</evidence>
<reference key="1">
    <citation type="journal article" date="2009" name="Nature">
        <title>Genome sequence and analysis of the Irish potato famine pathogen Phytophthora infestans.</title>
        <authorList>
            <consortium name="The Broad Institute Genome Sequencing Platform"/>
            <person name="Haas B.J."/>
            <person name="Kamoun S."/>
            <person name="Zody M.C."/>
            <person name="Jiang R.H."/>
            <person name="Handsaker R.E."/>
            <person name="Cano L.M."/>
            <person name="Grabherr M."/>
            <person name="Kodira C.D."/>
            <person name="Raffaele S."/>
            <person name="Torto-Alalibo T."/>
            <person name="Bozkurt T.O."/>
            <person name="Ah-Fong A.M."/>
            <person name="Alvarado L."/>
            <person name="Anderson V.L."/>
            <person name="Armstrong M.R."/>
            <person name="Avrova A."/>
            <person name="Baxter L."/>
            <person name="Beynon J."/>
            <person name="Boevink P.C."/>
            <person name="Bollmann S.R."/>
            <person name="Bos J.I."/>
            <person name="Bulone V."/>
            <person name="Cai G."/>
            <person name="Cakir C."/>
            <person name="Carrington J.C."/>
            <person name="Chawner M."/>
            <person name="Conti L."/>
            <person name="Costanzo S."/>
            <person name="Ewan R."/>
            <person name="Fahlgren N."/>
            <person name="Fischbach M.A."/>
            <person name="Fugelstad J."/>
            <person name="Gilroy E.M."/>
            <person name="Gnerre S."/>
            <person name="Green P.J."/>
            <person name="Grenville-Briggs L.J."/>
            <person name="Griffith J."/>
            <person name="Grunwald N.J."/>
            <person name="Horn K."/>
            <person name="Horner N.R."/>
            <person name="Hu C.H."/>
            <person name="Huitema E."/>
            <person name="Jeong D.H."/>
            <person name="Jones A.M."/>
            <person name="Jones J.D."/>
            <person name="Jones R.W."/>
            <person name="Karlsson E.K."/>
            <person name="Kunjeti S.G."/>
            <person name="Lamour K."/>
            <person name="Liu Z."/>
            <person name="Ma L."/>
            <person name="Maclean D."/>
            <person name="Chibucos M.C."/>
            <person name="McDonald H."/>
            <person name="McWalters J."/>
            <person name="Meijer H.J."/>
            <person name="Morgan W."/>
            <person name="Morris P.F."/>
            <person name="Munro C.A."/>
            <person name="O'Neill K."/>
            <person name="Ospina-Giraldo M."/>
            <person name="Pinzon A."/>
            <person name="Pritchard L."/>
            <person name="Ramsahoye B."/>
            <person name="Ren Q."/>
            <person name="Restrepo S."/>
            <person name="Roy S."/>
            <person name="Sadanandom A."/>
            <person name="Savidor A."/>
            <person name="Schornack S."/>
            <person name="Schwartz D.C."/>
            <person name="Schumann U.D."/>
            <person name="Schwessinger B."/>
            <person name="Seyer L."/>
            <person name="Sharpe T."/>
            <person name="Silvar C."/>
            <person name="Song J."/>
            <person name="Studholme D.J."/>
            <person name="Sykes S."/>
            <person name="Thines M."/>
            <person name="van de Vondervoort P.J."/>
            <person name="Phuntumart V."/>
            <person name="Wawra S."/>
            <person name="Weide R."/>
            <person name="Win J."/>
            <person name="Young C."/>
            <person name="Zhou S."/>
            <person name="Fry W."/>
            <person name="Meyers B.C."/>
            <person name="van West P."/>
            <person name="Ristaino J."/>
            <person name="Govers F."/>
            <person name="Birch P.R."/>
            <person name="Whisson S.C."/>
            <person name="Judelson H.S."/>
            <person name="Nusbaum C."/>
        </authorList>
    </citation>
    <scope>NUCLEOTIDE SEQUENCE [LARGE SCALE GENOMIC DNA]</scope>
    <scope>INDUCTION</scope>
    <source>
        <strain>T30-4</strain>
    </source>
</reference>
<reference key="2">
    <citation type="journal article" date="2007" name="Nature">
        <title>A translocation signal for delivery of oomycete effector proteins into host plant cells.</title>
        <authorList>
            <person name="Whisson S.C."/>
            <person name="Boevink P.C."/>
            <person name="Moleleki L."/>
            <person name="Avrova A.O."/>
            <person name="Morales J.G."/>
            <person name="Gilroy E.M."/>
            <person name="Armstrong M.R."/>
            <person name="Grouffaud S."/>
            <person name="van West P."/>
            <person name="Chapman S."/>
            <person name="Hein I."/>
            <person name="Toth I.K."/>
            <person name="Pritchard L."/>
            <person name="Birch P.R."/>
        </authorList>
    </citation>
    <scope>INDUCTION</scope>
    <scope>DOMAIN</scope>
</reference>
<reference key="3">
    <citation type="journal article" date="2009" name="Plant Cell">
        <title>In planta expression screens of Phytophthora infestans RXLR effectors reveal diverse phenotypes, including activation of the Solanum bulbocastanum disease resistance protein Rpi-blb2.</title>
        <authorList>
            <person name="Oh S.K."/>
            <person name="Young C."/>
            <person name="Lee M."/>
            <person name="Oliva R."/>
            <person name="Bozkurt T.O."/>
            <person name="Cano L.M."/>
            <person name="Win J."/>
            <person name="Bos J.I."/>
            <person name="Liu H.Y."/>
            <person name="van Damme M."/>
            <person name="Morgan W."/>
            <person name="Choi D."/>
            <person name="Van der Vossen E.A."/>
            <person name="Vleeshouwers V.G."/>
            <person name="Kamoun S."/>
        </authorList>
    </citation>
    <scope>INDUCTION</scope>
</reference>
<reference key="4">
    <citation type="journal article" date="2015" name="Mol. Plant">
        <title>A host KH RNA-binding protein is a susceptibility factor targeted by an RXLR effector to promote late blight disease.</title>
        <authorList>
            <person name="Wang X."/>
            <person name="Boevink P."/>
            <person name="McLellan H."/>
            <person name="Armstrong M."/>
            <person name="Bukharova T."/>
            <person name="Qin Z."/>
            <person name="Birch P.R."/>
        </authorList>
    </citation>
    <scope>FUNCTION</scope>
    <scope>SUBCELLULAR LOCATION</scope>
    <scope>INTERACTION WITH POTATO KRBP1</scope>
</reference>
<reference key="5">
    <citation type="journal article" date="2017" name="BMC Genomics">
        <title>RNA-seq of life stages of the oomycete Phytophthora infestans reveals dynamic changes in metabolic, signal transduction, and pathogenesis genes and a major role for calcium signaling in development.</title>
        <authorList>
            <person name="Ah-Fong A.M."/>
            <person name="Kim K.S."/>
            <person name="Judelson H.S."/>
        </authorList>
    </citation>
    <scope>INDUCTION</scope>
</reference>
<reference key="6">
    <citation type="journal article" date="2017" name="Front. Plant Sci.">
        <title>Conserved RXLR effector genes of Phytophthora infestans expressed at the early stage of potato infection are suppressive to host defense.</title>
        <authorList>
            <person name="Yin J."/>
            <person name="Gu B."/>
            <person name="Huang G."/>
            <person name="Tian Y."/>
            <person name="Quan J."/>
            <person name="Lindqvist-Kreuze H."/>
            <person name="Shan W."/>
        </authorList>
    </citation>
    <scope>INDUCTION</scope>
</reference>
<comment type="function">
    <text evidence="5">Effector that enhances P.infestans colonization of host plant leaves (PubMed:25936676). During the early stages of P.infestans infection, interacts with and stabilizes host potato K-homology (KH) RNA-binding protein KRBP1, leading to its accumulation (PubMed:25936676).</text>
</comment>
<comment type="subunit">
    <text evidence="5">Interacts with host KRBP1.</text>
</comment>
<comment type="subcellular location">
    <subcellularLocation>
        <location evidence="5">Secreted</location>
    </subcellularLocation>
    <subcellularLocation>
        <location evidence="5">Host cytoplasm</location>
    </subcellularLocation>
    <subcellularLocation>
        <location evidence="5">Host nucleus</location>
        <location evidence="5">Host nucleolus</location>
    </subcellularLocation>
    <subcellularLocation>
        <location evidence="5">Host nucleus</location>
    </subcellularLocation>
    <text evidence="5">Forms a ring around the nucleolus. Nuclear localization is necessary to promote P.infestans colonization.</text>
</comment>
<comment type="induction">
    <text evidence="2 3 4 6 7">Expression is induced during host plant infection.</text>
</comment>
<comment type="domain">
    <text evidence="10">The RxLR-dEER motif acts to carry the protein into the host cell cytoplasm through binding to cell surface phosphatidylinositol-3-phosphate.</text>
</comment>
<comment type="similarity">
    <text evidence="9">Belongs to the RxLR effector family.</text>
</comment>
<organism>
    <name type="scientific">Phytophthora infestans (strain T30-4)</name>
    <name type="common">Potato late blight agent</name>
    <dbReference type="NCBI Taxonomy" id="403677"/>
    <lineage>
        <taxon>Eukaryota</taxon>
        <taxon>Sar</taxon>
        <taxon>Stramenopiles</taxon>
        <taxon>Oomycota</taxon>
        <taxon>Peronosporales</taxon>
        <taxon>Peronosporaceae</taxon>
        <taxon>Phytophthora</taxon>
    </lineage>
</organism>